<reference key="1">
    <citation type="journal article" date="2001" name="Lancet">
        <title>Whole genome sequencing of meticillin-resistant Staphylococcus aureus.</title>
        <authorList>
            <person name="Kuroda M."/>
            <person name="Ohta T."/>
            <person name="Uchiyama I."/>
            <person name="Baba T."/>
            <person name="Yuzawa H."/>
            <person name="Kobayashi I."/>
            <person name="Cui L."/>
            <person name="Oguchi A."/>
            <person name="Aoki K."/>
            <person name="Nagai Y."/>
            <person name="Lian J.-Q."/>
            <person name="Ito T."/>
            <person name="Kanamori M."/>
            <person name="Matsumaru H."/>
            <person name="Maruyama A."/>
            <person name="Murakami H."/>
            <person name="Hosoyama A."/>
            <person name="Mizutani-Ui Y."/>
            <person name="Takahashi N.K."/>
            <person name="Sawano T."/>
            <person name="Inoue R."/>
            <person name="Kaito C."/>
            <person name="Sekimizu K."/>
            <person name="Hirakawa H."/>
            <person name="Kuhara S."/>
            <person name="Goto S."/>
            <person name="Yabuzaki J."/>
            <person name="Kanehisa M."/>
            <person name="Yamashita A."/>
            <person name="Oshima K."/>
            <person name="Furuya K."/>
            <person name="Yoshino C."/>
            <person name="Shiba T."/>
            <person name="Hattori M."/>
            <person name="Ogasawara N."/>
            <person name="Hayashi H."/>
            <person name="Hiramatsu K."/>
        </authorList>
    </citation>
    <scope>NUCLEOTIDE SEQUENCE [LARGE SCALE GENOMIC DNA]</scope>
    <source>
        <strain>N315</strain>
    </source>
</reference>
<proteinExistence type="inferred from homology"/>
<feature type="chain" id="PRO_0000387311" description="Probable inorganic carbon transporter subunit DabA">
    <location>
        <begin position="1"/>
        <end position="901"/>
    </location>
</feature>
<feature type="binding site" evidence="1">
    <location>
        <position position="424"/>
    </location>
    <ligand>
        <name>Zn(2+)</name>
        <dbReference type="ChEBI" id="CHEBI:29105"/>
    </ligand>
</feature>
<feature type="binding site" evidence="1">
    <location>
        <position position="426"/>
    </location>
    <ligand>
        <name>Zn(2+)</name>
        <dbReference type="ChEBI" id="CHEBI:29105"/>
    </ligand>
</feature>
<feature type="binding site" evidence="1">
    <location>
        <position position="606"/>
    </location>
    <ligand>
        <name>Zn(2+)</name>
        <dbReference type="ChEBI" id="CHEBI:29105"/>
    </ligand>
</feature>
<feature type="binding site" evidence="1">
    <location>
        <position position="621"/>
    </location>
    <ligand>
        <name>Zn(2+)</name>
        <dbReference type="ChEBI" id="CHEBI:29105"/>
    </ligand>
</feature>
<protein>
    <recommendedName>
        <fullName evidence="1">Probable inorganic carbon transporter subunit DabA</fullName>
    </recommendedName>
</protein>
<comment type="function">
    <text evidence="1">Part of an energy-coupled inorganic carbon pump.</text>
</comment>
<comment type="cofactor">
    <cofactor evidence="1">
        <name>Zn(2+)</name>
        <dbReference type="ChEBI" id="CHEBI:29105"/>
    </cofactor>
</comment>
<comment type="subunit">
    <text evidence="1">Forms a complex with DabB.</text>
</comment>
<comment type="subcellular location">
    <subcellularLocation>
        <location evidence="1">Cell membrane</location>
        <topology evidence="1">Peripheral membrane protein</topology>
    </subcellularLocation>
</comment>
<comment type="similarity">
    <text evidence="1">Belongs to the inorganic carbon transporter (TC 9.A.2) DabA family.</text>
</comment>
<sequence>MTTQLNINSVIENAKRVITPLSPISIFAARNPWEGLEADTFEDVAKWLRDVRDVDIFPNKALIESAVARGELDESVFNQLVTDMLLEHHYNIPQHYINLYIDNIKTLKDVPASYMNHSNVDVVADLLLEKSKRDMAESYHHYDVRPMSDAIIDEQGEPLSEQVNRQMIKWTKLYIDQFLSSWTMPKREQSFYHAWLHLAQHDHSFTKAQRQVIKGLPNDPEMTIESVLTYFSIDQEDYQAYVEGHLLALPGWAGMLYYRSQQHHFEQHLLTDYLAIRLVVEQLLVGDEFKSVTKDCESRSENWFKQTVASLCYYSDMPSDVLLQHDVNEIQTFIHFAATMNKNVFKNLWLIAWEMTYESQLKQKIKAGHESVAGALDVNQVNVSENDNANQPHSVLLNDTQAVDENNSELNQVGTSTKAQIAFCIDVRSEPFRRHIEAAGPFETIGIAGFFGLPIQKDAVDEQFKHDSLPVMVPPAYRIKEFADRYDMNVYRQQQQTMSSMFYTFKLMKNNVMPSLLLPELSGPFLSLSTIVNSIMPRKSRASLQKIKQKWLKKPETKLTIDREFDRTSDLPVGFTEQEQIDFALQALKLMDLTEAFAPFVVLAGHASHSHNNPHHASLECGACGGASSGFNAKLLAMICNRPNVRQGLKQSGVYIPETTVFAAAEHHTSTDTLAWVYVPDTLSALALDAYESLNDAMPMISEQANRERLDKLPTIGRVNHPVEEAQRFASDWSEVRPEWGLAKNASFIIGRRQLTKGIDLEGRTFLHNYDWRKDKDGKLLNTIISGPALVAQWINLQYYASTVAPHFYGSGNKATQTVTSGVGVMQGNASDLMYGLSWQSVMAADRTMYHSPIRLLVVIQAPDYVVARLFANNEHFARKVSNHWLRLMSVNEEGRFKSWI</sequence>
<dbReference type="EMBL" id="BA000018">
    <property type="protein sequence ID" value="BAB41642.1"/>
    <property type="molecule type" value="Genomic_DNA"/>
</dbReference>
<dbReference type="PIR" id="G89810">
    <property type="entry name" value="G89810"/>
</dbReference>
<dbReference type="RefSeq" id="WP_000211545.1">
    <property type="nucleotide sequence ID" value="NC_002745.2"/>
</dbReference>
<dbReference type="EnsemblBacteria" id="BAB41642">
    <property type="protein sequence ID" value="BAB41642"/>
    <property type="gene ID" value="BAB41642"/>
</dbReference>
<dbReference type="KEGG" id="sau:SA0412"/>
<dbReference type="HOGENOM" id="CLU_009885_0_0_9"/>
<dbReference type="GO" id="GO:0005886">
    <property type="term" value="C:plasma membrane"/>
    <property type="evidence" value="ECO:0007669"/>
    <property type="project" value="UniProtKB-SubCell"/>
</dbReference>
<dbReference type="GO" id="GO:0008270">
    <property type="term" value="F:zinc ion binding"/>
    <property type="evidence" value="ECO:0007669"/>
    <property type="project" value="UniProtKB-UniRule"/>
</dbReference>
<dbReference type="HAMAP" id="MF_01871">
    <property type="entry name" value="DabA"/>
    <property type="match status" value="1"/>
</dbReference>
<dbReference type="InterPro" id="IPR018752">
    <property type="entry name" value="DabA"/>
</dbReference>
<dbReference type="PANTHER" id="PTHR38344:SF1">
    <property type="entry name" value="INORGANIC CARBON TRANSPORTER SUBUNIT DABA-RELATED"/>
    <property type="match status" value="1"/>
</dbReference>
<dbReference type="PANTHER" id="PTHR38344">
    <property type="entry name" value="UPF0753 PROTEIN AQ_863"/>
    <property type="match status" value="1"/>
</dbReference>
<dbReference type="Pfam" id="PF10070">
    <property type="entry name" value="DabA"/>
    <property type="match status" value="1"/>
</dbReference>
<organism>
    <name type="scientific">Staphylococcus aureus (strain N315)</name>
    <dbReference type="NCBI Taxonomy" id="158879"/>
    <lineage>
        <taxon>Bacteria</taxon>
        <taxon>Bacillati</taxon>
        <taxon>Bacillota</taxon>
        <taxon>Bacilli</taxon>
        <taxon>Bacillales</taxon>
        <taxon>Staphylococcaceae</taxon>
        <taxon>Staphylococcus</taxon>
    </lineage>
</organism>
<keyword id="KW-1003">Cell membrane</keyword>
<keyword id="KW-0472">Membrane</keyword>
<keyword id="KW-0479">Metal-binding</keyword>
<keyword id="KW-0813">Transport</keyword>
<keyword id="KW-0862">Zinc</keyword>
<evidence type="ECO:0000255" key="1">
    <source>
        <dbReference type="HAMAP-Rule" id="MF_01871"/>
    </source>
</evidence>
<name>DABA_STAAN</name>
<accession>Q7A7F0</accession>
<gene>
    <name evidence="1" type="primary">dabA</name>
    <name type="ordered locus">SA0412</name>
</gene>